<accession>A5I4S1</accession>
<accession>A7G5X6</accession>
<evidence type="ECO:0000255" key="1">
    <source>
        <dbReference type="HAMAP-Rule" id="MF_00151"/>
    </source>
</evidence>
<comment type="function">
    <text evidence="1">Reversibly transfers an adenylyl group from ATP to 4'-phosphopantetheine, yielding dephospho-CoA (dPCoA) and pyrophosphate.</text>
</comment>
<comment type="catalytic activity">
    <reaction evidence="1">
        <text>(R)-4'-phosphopantetheine + ATP + H(+) = 3'-dephospho-CoA + diphosphate</text>
        <dbReference type="Rhea" id="RHEA:19801"/>
        <dbReference type="ChEBI" id="CHEBI:15378"/>
        <dbReference type="ChEBI" id="CHEBI:30616"/>
        <dbReference type="ChEBI" id="CHEBI:33019"/>
        <dbReference type="ChEBI" id="CHEBI:57328"/>
        <dbReference type="ChEBI" id="CHEBI:61723"/>
        <dbReference type="EC" id="2.7.7.3"/>
    </reaction>
</comment>
<comment type="cofactor">
    <cofactor evidence="1">
        <name>Mg(2+)</name>
        <dbReference type="ChEBI" id="CHEBI:18420"/>
    </cofactor>
</comment>
<comment type="pathway">
    <text evidence="1">Cofactor biosynthesis; coenzyme A biosynthesis; CoA from (R)-pantothenate: step 4/5.</text>
</comment>
<comment type="subunit">
    <text evidence="1">Homohexamer.</text>
</comment>
<comment type="subcellular location">
    <subcellularLocation>
        <location evidence="1">Cytoplasm</location>
    </subcellularLocation>
</comment>
<comment type="similarity">
    <text evidence="1">Belongs to the bacterial CoaD family.</text>
</comment>
<dbReference type="EC" id="2.7.7.3" evidence="1"/>
<dbReference type="EMBL" id="CP000727">
    <property type="protein sequence ID" value="ABS37856.1"/>
    <property type="molecule type" value="Genomic_DNA"/>
</dbReference>
<dbReference type="EMBL" id="AM412317">
    <property type="protein sequence ID" value="CAL84044.1"/>
    <property type="molecule type" value="Genomic_DNA"/>
</dbReference>
<dbReference type="RefSeq" id="WP_003388467.1">
    <property type="nucleotide sequence ID" value="NC_009698.1"/>
</dbReference>
<dbReference type="RefSeq" id="YP_001254988.1">
    <property type="nucleotide sequence ID" value="NC_009495.1"/>
</dbReference>
<dbReference type="RefSeq" id="YP_001388191.1">
    <property type="nucleotide sequence ID" value="NC_009698.1"/>
</dbReference>
<dbReference type="SMR" id="A5I4S1"/>
<dbReference type="GeneID" id="5186749"/>
<dbReference type="KEGG" id="cbh:CLC_2348"/>
<dbReference type="KEGG" id="cbo:CBO2494"/>
<dbReference type="PATRIC" id="fig|413999.7.peg.2471"/>
<dbReference type="HOGENOM" id="CLU_100149_0_1_9"/>
<dbReference type="UniPathway" id="UPA00241">
    <property type="reaction ID" value="UER00355"/>
</dbReference>
<dbReference type="PRO" id="PR:A5I4S1"/>
<dbReference type="Proteomes" id="UP000001986">
    <property type="component" value="Chromosome"/>
</dbReference>
<dbReference type="GO" id="GO:0005737">
    <property type="term" value="C:cytoplasm"/>
    <property type="evidence" value="ECO:0007669"/>
    <property type="project" value="UniProtKB-SubCell"/>
</dbReference>
<dbReference type="GO" id="GO:0005524">
    <property type="term" value="F:ATP binding"/>
    <property type="evidence" value="ECO:0007669"/>
    <property type="project" value="UniProtKB-KW"/>
</dbReference>
<dbReference type="GO" id="GO:0004595">
    <property type="term" value="F:pantetheine-phosphate adenylyltransferase activity"/>
    <property type="evidence" value="ECO:0000318"/>
    <property type="project" value="GO_Central"/>
</dbReference>
<dbReference type="GO" id="GO:0015937">
    <property type="term" value="P:coenzyme A biosynthetic process"/>
    <property type="evidence" value="ECO:0000318"/>
    <property type="project" value="GO_Central"/>
</dbReference>
<dbReference type="CDD" id="cd02163">
    <property type="entry name" value="PPAT"/>
    <property type="match status" value="1"/>
</dbReference>
<dbReference type="Gene3D" id="3.40.50.620">
    <property type="entry name" value="HUPs"/>
    <property type="match status" value="1"/>
</dbReference>
<dbReference type="HAMAP" id="MF_00151">
    <property type="entry name" value="PPAT_bact"/>
    <property type="match status" value="1"/>
</dbReference>
<dbReference type="InterPro" id="IPR004821">
    <property type="entry name" value="Cyt_trans-like"/>
</dbReference>
<dbReference type="InterPro" id="IPR001980">
    <property type="entry name" value="PPAT"/>
</dbReference>
<dbReference type="InterPro" id="IPR014729">
    <property type="entry name" value="Rossmann-like_a/b/a_fold"/>
</dbReference>
<dbReference type="NCBIfam" id="TIGR01510">
    <property type="entry name" value="coaD_prev_kdtB"/>
    <property type="match status" value="1"/>
</dbReference>
<dbReference type="NCBIfam" id="TIGR00125">
    <property type="entry name" value="cyt_tran_rel"/>
    <property type="match status" value="1"/>
</dbReference>
<dbReference type="PANTHER" id="PTHR21342">
    <property type="entry name" value="PHOSPHOPANTETHEINE ADENYLYLTRANSFERASE"/>
    <property type="match status" value="1"/>
</dbReference>
<dbReference type="PANTHER" id="PTHR21342:SF1">
    <property type="entry name" value="PHOSPHOPANTETHEINE ADENYLYLTRANSFERASE"/>
    <property type="match status" value="1"/>
</dbReference>
<dbReference type="Pfam" id="PF01467">
    <property type="entry name" value="CTP_transf_like"/>
    <property type="match status" value="1"/>
</dbReference>
<dbReference type="PRINTS" id="PR01020">
    <property type="entry name" value="LPSBIOSNTHSS"/>
</dbReference>
<dbReference type="SUPFAM" id="SSF52374">
    <property type="entry name" value="Nucleotidylyl transferase"/>
    <property type="match status" value="1"/>
</dbReference>
<gene>
    <name evidence="1" type="primary">coaD</name>
    <name type="ordered locus">CBO2494</name>
    <name type="ordered locus">CLC_2348</name>
</gene>
<protein>
    <recommendedName>
        <fullName evidence="1">Phosphopantetheine adenylyltransferase</fullName>
        <ecNumber evidence="1">2.7.7.3</ecNumber>
    </recommendedName>
    <alternativeName>
        <fullName evidence="1">Dephospho-CoA pyrophosphorylase</fullName>
    </alternativeName>
    <alternativeName>
        <fullName evidence="1">Pantetheine-phosphate adenylyltransferase</fullName>
        <shortName evidence="1">PPAT</shortName>
    </alternativeName>
</protein>
<feature type="chain" id="PRO_1000011126" description="Phosphopantetheine adenylyltransferase">
    <location>
        <begin position="1"/>
        <end position="164"/>
    </location>
</feature>
<feature type="binding site" evidence="1">
    <location>
        <begin position="9"/>
        <end position="10"/>
    </location>
    <ligand>
        <name>ATP</name>
        <dbReference type="ChEBI" id="CHEBI:30616"/>
    </ligand>
</feature>
<feature type="binding site" evidence="1">
    <location>
        <position position="9"/>
    </location>
    <ligand>
        <name>substrate</name>
    </ligand>
</feature>
<feature type="binding site" evidence="1">
    <location>
        <position position="17"/>
    </location>
    <ligand>
        <name>ATP</name>
        <dbReference type="ChEBI" id="CHEBI:30616"/>
    </ligand>
</feature>
<feature type="binding site" evidence="1">
    <location>
        <position position="41"/>
    </location>
    <ligand>
        <name>substrate</name>
    </ligand>
</feature>
<feature type="binding site" evidence="1">
    <location>
        <position position="73"/>
    </location>
    <ligand>
        <name>substrate</name>
    </ligand>
</feature>
<feature type="binding site" evidence="1">
    <location>
        <position position="87"/>
    </location>
    <ligand>
        <name>substrate</name>
    </ligand>
</feature>
<feature type="binding site" evidence="1">
    <location>
        <begin position="88"/>
        <end position="90"/>
    </location>
    <ligand>
        <name>ATP</name>
        <dbReference type="ChEBI" id="CHEBI:30616"/>
    </ligand>
</feature>
<feature type="binding site" evidence="1">
    <location>
        <position position="98"/>
    </location>
    <ligand>
        <name>ATP</name>
        <dbReference type="ChEBI" id="CHEBI:30616"/>
    </ligand>
</feature>
<feature type="binding site" evidence="1">
    <location>
        <begin position="123"/>
        <end position="129"/>
    </location>
    <ligand>
        <name>ATP</name>
        <dbReference type="ChEBI" id="CHEBI:30616"/>
    </ligand>
</feature>
<feature type="site" description="Transition state stabilizer" evidence="1">
    <location>
        <position position="17"/>
    </location>
</feature>
<organism>
    <name type="scientific">Clostridium botulinum (strain Hall / ATCC 3502 / NCTC 13319 / Type A)</name>
    <dbReference type="NCBI Taxonomy" id="441771"/>
    <lineage>
        <taxon>Bacteria</taxon>
        <taxon>Bacillati</taxon>
        <taxon>Bacillota</taxon>
        <taxon>Clostridia</taxon>
        <taxon>Eubacteriales</taxon>
        <taxon>Clostridiaceae</taxon>
        <taxon>Clostridium</taxon>
    </lineage>
</organism>
<sequence length="164" mass="18667">MKTAVYPGSFDPITKGHLNIIKRASKVCDKLIVAVLVNPEKKGLFSVDERVEMIKRVTKKHSNVEVQCFSGLLIDFMKEKKSKVIIKGLRTMSDFEYEFKMALMNNKLDPNIETVFMMTNAKYSYLSSSSVKQVAMFGGCIKDLVPDEIIPDIKKKINHKKECI</sequence>
<keyword id="KW-0067">ATP-binding</keyword>
<keyword id="KW-0173">Coenzyme A biosynthesis</keyword>
<keyword id="KW-0963">Cytoplasm</keyword>
<keyword id="KW-0460">Magnesium</keyword>
<keyword id="KW-0547">Nucleotide-binding</keyword>
<keyword id="KW-0548">Nucleotidyltransferase</keyword>
<keyword id="KW-1185">Reference proteome</keyword>
<keyword id="KW-0808">Transferase</keyword>
<reference key="1">
    <citation type="journal article" date="2007" name="Genome Res.">
        <title>Genome sequence of a proteolytic (Group I) Clostridium botulinum strain Hall A and comparative analysis of the clostridial genomes.</title>
        <authorList>
            <person name="Sebaihia M."/>
            <person name="Peck M.W."/>
            <person name="Minton N.P."/>
            <person name="Thomson N.R."/>
            <person name="Holden M.T.G."/>
            <person name="Mitchell W.J."/>
            <person name="Carter A.T."/>
            <person name="Bentley S.D."/>
            <person name="Mason D.R."/>
            <person name="Crossman L."/>
            <person name="Paul C.J."/>
            <person name="Ivens A."/>
            <person name="Wells-Bennik M.H.J."/>
            <person name="Davis I.J."/>
            <person name="Cerdeno-Tarraga A.M."/>
            <person name="Churcher C."/>
            <person name="Quail M.A."/>
            <person name="Chillingworth T."/>
            <person name="Feltwell T."/>
            <person name="Fraser A."/>
            <person name="Goodhead I."/>
            <person name="Hance Z."/>
            <person name="Jagels K."/>
            <person name="Larke N."/>
            <person name="Maddison M."/>
            <person name="Moule S."/>
            <person name="Mungall K."/>
            <person name="Norbertczak H."/>
            <person name="Rabbinowitsch E."/>
            <person name="Sanders M."/>
            <person name="Simmonds M."/>
            <person name="White B."/>
            <person name="Whithead S."/>
            <person name="Parkhill J."/>
        </authorList>
    </citation>
    <scope>NUCLEOTIDE SEQUENCE [LARGE SCALE GENOMIC DNA]</scope>
    <source>
        <strain>Hall / ATCC 3502 / NCTC 13319 / Type A</strain>
    </source>
</reference>
<reference key="2">
    <citation type="journal article" date="2007" name="PLoS ONE">
        <title>Analysis of the neurotoxin complex genes in Clostridium botulinum A1-A4 and B1 strains: BoNT/A3, /Ba4 and /B1 clusters are located within plasmids.</title>
        <authorList>
            <person name="Smith T.J."/>
            <person name="Hill K.K."/>
            <person name="Foley B.T."/>
            <person name="Detter J.C."/>
            <person name="Munk A.C."/>
            <person name="Bruce D.C."/>
            <person name="Doggett N.A."/>
            <person name="Smith L.A."/>
            <person name="Marks J.D."/>
            <person name="Xie G."/>
            <person name="Brettin T.S."/>
        </authorList>
    </citation>
    <scope>NUCLEOTIDE SEQUENCE [LARGE SCALE GENOMIC DNA]</scope>
    <source>
        <strain>Hall / ATCC 3502 / NCTC 13319 / Type A</strain>
    </source>
</reference>
<proteinExistence type="inferred from homology"/>
<name>COAD_CLOBH</name>